<gene>
    <name evidence="1" type="primary">mtnA</name>
    <name type="ordered locus">BC_4032</name>
</gene>
<comment type="function">
    <text evidence="1">Catalyzes the interconversion of methylthioribose-1-phosphate (MTR-1-P) into methylthioribulose-1-phosphate (MTRu-1-P).</text>
</comment>
<comment type="catalytic activity">
    <reaction evidence="1">
        <text>5-(methylsulfanyl)-alpha-D-ribose 1-phosphate = 5-(methylsulfanyl)-D-ribulose 1-phosphate</text>
        <dbReference type="Rhea" id="RHEA:19989"/>
        <dbReference type="ChEBI" id="CHEBI:58533"/>
        <dbReference type="ChEBI" id="CHEBI:58548"/>
        <dbReference type="EC" id="5.3.1.23"/>
    </reaction>
</comment>
<comment type="pathway">
    <text evidence="1">Amino-acid biosynthesis; L-methionine biosynthesis via salvage pathway; L-methionine from S-methyl-5-thio-alpha-D-ribose 1-phosphate: step 1/6.</text>
</comment>
<comment type="subunit">
    <text evidence="1">Homodimer.</text>
</comment>
<comment type="similarity">
    <text evidence="1">Belongs to the EIF-2B alpha/beta/delta subunits family. MtnA subfamily.</text>
</comment>
<feature type="chain" id="PRO_0000357145" description="Methylthioribose-1-phosphate isomerase">
    <location>
        <begin position="1"/>
        <end position="353"/>
    </location>
</feature>
<feature type="active site" description="Proton donor" evidence="1">
    <location>
        <position position="240"/>
    </location>
</feature>
<feature type="binding site" evidence="1">
    <location>
        <begin position="51"/>
        <end position="53"/>
    </location>
    <ligand>
        <name>substrate</name>
    </ligand>
</feature>
<feature type="binding site" evidence="1">
    <location>
        <position position="94"/>
    </location>
    <ligand>
        <name>substrate</name>
    </ligand>
</feature>
<feature type="binding site" evidence="1">
    <location>
        <position position="199"/>
    </location>
    <ligand>
        <name>substrate</name>
    </ligand>
</feature>
<feature type="binding site" evidence="1">
    <location>
        <begin position="250"/>
        <end position="251"/>
    </location>
    <ligand>
        <name>substrate</name>
    </ligand>
</feature>
<feature type="site" description="Transition state stabilizer" evidence="1">
    <location>
        <position position="160"/>
    </location>
</feature>
<protein>
    <recommendedName>
        <fullName evidence="1">Methylthioribose-1-phosphate isomerase</fullName>
        <shortName evidence="1">M1Pi</shortName>
        <shortName evidence="1">MTR-1-P isomerase</shortName>
        <ecNumber evidence="1">5.3.1.23</ecNumber>
    </recommendedName>
    <alternativeName>
        <fullName evidence="1">S-methyl-5-thioribose-1-phosphate isomerase</fullName>
    </alternativeName>
</protein>
<evidence type="ECO:0000255" key="1">
    <source>
        <dbReference type="HAMAP-Rule" id="MF_01678"/>
    </source>
</evidence>
<sequence>MSTIVTVPRSVSWKGDAIAVLNQTKLPHSTEYKTLTTIEEVWKSIIMLEVRGAPAIGIVAAFGLALAAKKYNTLHIEEFQKKFNRDCNYLGTSRPTAVNLFWAIDRMRESIREITTIKEAQKILEEEALRIQQEDEEVCRNIGEYALTCFKDGDNILTICNAGSIATARYGTALAPFYIGKEKGVRLHAYACETRPVLQGGRLTTWELKQANIDVTLITDNTAAHAIQTKEINAIIVGADRIVANGDTANKIGTMNLAILAKYFNIPFYVAAPLSTFDVTKETGAEIIIEERDETEVTKIFGKQVAPIGTDVYNPAFDITPNELITGIITEKGIIRGDYKREIASLFEKQANT</sequence>
<keyword id="KW-0028">Amino-acid biosynthesis</keyword>
<keyword id="KW-0413">Isomerase</keyword>
<keyword id="KW-0486">Methionine biosynthesis</keyword>
<keyword id="KW-1185">Reference proteome</keyword>
<accession>Q819F2</accession>
<dbReference type="EC" id="5.3.1.23" evidence="1"/>
<dbReference type="EMBL" id="AE016877">
    <property type="protein sequence ID" value="AAP10951.1"/>
    <property type="molecule type" value="Genomic_DNA"/>
</dbReference>
<dbReference type="RefSeq" id="NP_833750.1">
    <property type="nucleotide sequence ID" value="NC_004722.1"/>
</dbReference>
<dbReference type="RefSeq" id="WP_000104604.1">
    <property type="nucleotide sequence ID" value="NZ_CP138336.1"/>
</dbReference>
<dbReference type="SMR" id="Q819F2"/>
<dbReference type="STRING" id="226900.BC_4032"/>
<dbReference type="KEGG" id="bce:BC4032"/>
<dbReference type="PATRIC" id="fig|226900.8.peg.4163"/>
<dbReference type="HOGENOM" id="CLU_016218_1_2_9"/>
<dbReference type="OrthoDB" id="9803436at2"/>
<dbReference type="UniPathway" id="UPA00904">
    <property type="reaction ID" value="UER00874"/>
</dbReference>
<dbReference type="Proteomes" id="UP000001417">
    <property type="component" value="Chromosome"/>
</dbReference>
<dbReference type="GO" id="GO:0046523">
    <property type="term" value="F:S-methyl-5-thioribose-1-phosphate isomerase activity"/>
    <property type="evidence" value="ECO:0000318"/>
    <property type="project" value="GO_Central"/>
</dbReference>
<dbReference type="GO" id="GO:0019509">
    <property type="term" value="P:L-methionine salvage from methylthioadenosine"/>
    <property type="evidence" value="ECO:0000318"/>
    <property type="project" value="GO_Central"/>
</dbReference>
<dbReference type="FunFam" id="1.20.120.420:FF:000005">
    <property type="entry name" value="Methylthioribose-1-phosphate isomerase"/>
    <property type="match status" value="1"/>
</dbReference>
<dbReference type="FunFam" id="3.40.50.10470:FF:000006">
    <property type="entry name" value="Methylthioribose-1-phosphate isomerase"/>
    <property type="match status" value="1"/>
</dbReference>
<dbReference type="Gene3D" id="1.20.120.420">
    <property type="entry name" value="translation initiation factor eif-2b, domain 1"/>
    <property type="match status" value="1"/>
</dbReference>
<dbReference type="Gene3D" id="3.40.50.10470">
    <property type="entry name" value="Translation initiation factor eif-2b, domain 2"/>
    <property type="match status" value="1"/>
</dbReference>
<dbReference type="HAMAP" id="MF_01678">
    <property type="entry name" value="Salvage_MtnA"/>
    <property type="match status" value="1"/>
</dbReference>
<dbReference type="InterPro" id="IPR000649">
    <property type="entry name" value="IF-2B-related"/>
</dbReference>
<dbReference type="InterPro" id="IPR005251">
    <property type="entry name" value="IF-M1Pi"/>
</dbReference>
<dbReference type="InterPro" id="IPR042529">
    <property type="entry name" value="IF_2B-like_C"/>
</dbReference>
<dbReference type="InterPro" id="IPR011559">
    <property type="entry name" value="Initiation_fac_2B_a/b/d"/>
</dbReference>
<dbReference type="InterPro" id="IPR027363">
    <property type="entry name" value="M1Pi_N"/>
</dbReference>
<dbReference type="InterPro" id="IPR037171">
    <property type="entry name" value="NagB/RpiA_transferase-like"/>
</dbReference>
<dbReference type="NCBIfam" id="TIGR00524">
    <property type="entry name" value="eIF-2B_rel"/>
    <property type="match status" value="1"/>
</dbReference>
<dbReference type="NCBIfam" id="NF004326">
    <property type="entry name" value="PRK05720.1"/>
    <property type="match status" value="1"/>
</dbReference>
<dbReference type="NCBIfam" id="TIGR00512">
    <property type="entry name" value="salvage_mtnA"/>
    <property type="match status" value="1"/>
</dbReference>
<dbReference type="PANTHER" id="PTHR43475">
    <property type="entry name" value="METHYLTHIORIBOSE-1-PHOSPHATE ISOMERASE"/>
    <property type="match status" value="1"/>
</dbReference>
<dbReference type="PANTHER" id="PTHR43475:SF4">
    <property type="entry name" value="METHYLTHIORIBOSE-1-PHOSPHATE ISOMERASE"/>
    <property type="match status" value="1"/>
</dbReference>
<dbReference type="Pfam" id="PF01008">
    <property type="entry name" value="IF-2B"/>
    <property type="match status" value="1"/>
</dbReference>
<dbReference type="SUPFAM" id="SSF100950">
    <property type="entry name" value="NagB/RpiA/CoA transferase-like"/>
    <property type="match status" value="1"/>
</dbReference>
<name>MTNA_BACCR</name>
<reference key="1">
    <citation type="journal article" date="2003" name="Nature">
        <title>Genome sequence of Bacillus cereus and comparative analysis with Bacillus anthracis.</title>
        <authorList>
            <person name="Ivanova N."/>
            <person name="Sorokin A."/>
            <person name="Anderson I."/>
            <person name="Galleron N."/>
            <person name="Candelon B."/>
            <person name="Kapatral V."/>
            <person name="Bhattacharyya A."/>
            <person name="Reznik G."/>
            <person name="Mikhailova N."/>
            <person name="Lapidus A."/>
            <person name="Chu L."/>
            <person name="Mazur M."/>
            <person name="Goltsman E."/>
            <person name="Larsen N."/>
            <person name="D'Souza M."/>
            <person name="Walunas T."/>
            <person name="Grechkin Y."/>
            <person name="Pusch G."/>
            <person name="Haselkorn R."/>
            <person name="Fonstein M."/>
            <person name="Ehrlich S.D."/>
            <person name="Overbeek R."/>
            <person name="Kyrpides N.C."/>
        </authorList>
    </citation>
    <scope>NUCLEOTIDE SEQUENCE [LARGE SCALE GENOMIC DNA]</scope>
    <source>
        <strain>ATCC 14579 / DSM 31 / CCUG 7414 / JCM 2152 / NBRC 15305 / NCIMB 9373 / NCTC 2599 / NRRL B-3711</strain>
    </source>
</reference>
<organism>
    <name type="scientific">Bacillus cereus (strain ATCC 14579 / DSM 31 / CCUG 7414 / JCM 2152 / NBRC 15305 / NCIMB 9373 / NCTC 2599 / NRRL B-3711)</name>
    <dbReference type="NCBI Taxonomy" id="226900"/>
    <lineage>
        <taxon>Bacteria</taxon>
        <taxon>Bacillati</taxon>
        <taxon>Bacillota</taxon>
        <taxon>Bacilli</taxon>
        <taxon>Bacillales</taxon>
        <taxon>Bacillaceae</taxon>
        <taxon>Bacillus</taxon>
        <taxon>Bacillus cereus group</taxon>
    </lineage>
</organism>
<proteinExistence type="inferred from homology"/>